<organism>
    <name type="scientific">Mycobacterium tuberculosis (strain ATCC 25618 / H37Rv)</name>
    <dbReference type="NCBI Taxonomy" id="83332"/>
    <lineage>
        <taxon>Bacteria</taxon>
        <taxon>Bacillati</taxon>
        <taxon>Actinomycetota</taxon>
        <taxon>Actinomycetes</taxon>
        <taxon>Mycobacteriales</taxon>
        <taxon>Mycobacteriaceae</taxon>
        <taxon>Mycobacterium</taxon>
        <taxon>Mycobacterium tuberculosis complex</taxon>
    </lineage>
</organism>
<sequence length="122" mass="12651">MSAPDSITVTVADHNGVAVLSIGGEIDLITAAALEEAIGEVVADNPTALVIDLSAVEFLGSVGLKILAATSEKIGQSVKFGVVARGSVTRRPIHLMGLDKTFRLFSTLHDALTGVRGGRIDR</sequence>
<accession>P9WGE1</accession>
<accession>F2GFD0</accession>
<accession>O69655</accession>
<accession>Q7D525</accession>
<comment type="function">
    <text evidence="2">Positive regulator of sigma-F (SigF) activity. Binds to anti-sigma-F factor RsbW (UsfX) preventing its binding to SigF, thus activating transcription.</text>
</comment>
<comment type="subunit">
    <text evidence="2">Interacts with anti-sigma-F factor RsbW (UsfX). Its phosphorylation may prevent this interaction.</text>
</comment>
<comment type="PTM">
    <text evidence="2">Putative phosphorylation on Ser-61 may prevent interaction with RsbW.</text>
</comment>
<comment type="similarity">
    <text evidence="3">Belongs to the anti-sigma-factor antagonist family.</text>
</comment>
<dbReference type="EMBL" id="AL123456">
    <property type="protein sequence ID" value="CCP46511.1"/>
    <property type="molecule type" value="Genomic_DNA"/>
</dbReference>
<dbReference type="PIR" id="H70791">
    <property type="entry name" value="H70791"/>
</dbReference>
<dbReference type="RefSeq" id="NP_218204.1">
    <property type="nucleotide sequence ID" value="NC_000962.3"/>
</dbReference>
<dbReference type="RefSeq" id="WP_003419762.1">
    <property type="nucleotide sequence ID" value="NZ_NVQJ01000028.1"/>
</dbReference>
<dbReference type="PDB" id="8IH8">
    <property type="method" value="X-ray"/>
    <property type="resolution" value="2.00 A"/>
    <property type="chains" value="A/B=1-122"/>
</dbReference>
<dbReference type="PDBsum" id="8IH8"/>
<dbReference type="SMR" id="P9WGE1"/>
<dbReference type="IntAct" id="P9WGE1">
    <property type="interactions" value="1"/>
</dbReference>
<dbReference type="STRING" id="83332.Rv3687c"/>
<dbReference type="iPTMnet" id="P9WGE1"/>
<dbReference type="PaxDb" id="83332-Rv3687c"/>
<dbReference type="DNASU" id="885599"/>
<dbReference type="GeneID" id="885599"/>
<dbReference type="KEGG" id="mtu:Rv3687c"/>
<dbReference type="KEGG" id="mtv:RVBD_3687c"/>
<dbReference type="TubercuList" id="Rv3687c"/>
<dbReference type="eggNOG" id="COG1366">
    <property type="taxonomic scope" value="Bacteria"/>
</dbReference>
<dbReference type="InParanoid" id="P9WGE1"/>
<dbReference type="OrthoDB" id="3393696at2"/>
<dbReference type="PhylomeDB" id="P9WGE1"/>
<dbReference type="Proteomes" id="UP000001584">
    <property type="component" value="Chromosome"/>
</dbReference>
<dbReference type="GO" id="GO:0043856">
    <property type="term" value="F:anti-sigma factor antagonist activity"/>
    <property type="evidence" value="ECO:0000353"/>
    <property type="project" value="MTBBASE"/>
</dbReference>
<dbReference type="GO" id="GO:0006355">
    <property type="term" value="P:regulation of DNA-templated transcription"/>
    <property type="evidence" value="ECO:0000353"/>
    <property type="project" value="MTBBASE"/>
</dbReference>
<dbReference type="CDD" id="cd07043">
    <property type="entry name" value="STAS_anti-anti-sigma_factors"/>
    <property type="match status" value="1"/>
</dbReference>
<dbReference type="Gene3D" id="3.30.750.24">
    <property type="entry name" value="STAS domain"/>
    <property type="match status" value="1"/>
</dbReference>
<dbReference type="InterPro" id="IPR003658">
    <property type="entry name" value="Anti-sigma_ant"/>
</dbReference>
<dbReference type="InterPro" id="IPR002645">
    <property type="entry name" value="STAS_dom"/>
</dbReference>
<dbReference type="InterPro" id="IPR036513">
    <property type="entry name" value="STAS_dom_sf"/>
</dbReference>
<dbReference type="NCBIfam" id="TIGR00377">
    <property type="entry name" value="ant_ant_sig"/>
    <property type="match status" value="1"/>
</dbReference>
<dbReference type="PANTHER" id="PTHR33495">
    <property type="entry name" value="ANTI-SIGMA FACTOR ANTAGONIST TM_1081-RELATED-RELATED"/>
    <property type="match status" value="1"/>
</dbReference>
<dbReference type="PANTHER" id="PTHR33495:SF13">
    <property type="entry name" value="ANTI-SIGMA-F FACTOR ANTAGONIST RSFB"/>
    <property type="match status" value="1"/>
</dbReference>
<dbReference type="Pfam" id="PF01740">
    <property type="entry name" value="STAS"/>
    <property type="match status" value="1"/>
</dbReference>
<dbReference type="SUPFAM" id="SSF52091">
    <property type="entry name" value="SpoIIaa-like"/>
    <property type="match status" value="1"/>
</dbReference>
<dbReference type="PROSITE" id="PS50801">
    <property type="entry name" value="STAS"/>
    <property type="match status" value="1"/>
</dbReference>
<reference key="1">
    <citation type="journal article" date="1998" name="Nature">
        <title>Deciphering the biology of Mycobacterium tuberculosis from the complete genome sequence.</title>
        <authorList>
            <person name="Cole S.T."/>
            <person name="Brosch R."/>
            <person name="Parkhill J."/>
            <person name="Garnier T."/>
            <person name="Churcher C.M."/>
            <person name="Harris D.E."/>
            <person name="Gordon S.V."/>
            <person name="Eiglmeier K."/>
            <person name="Gas S."/>
            <person name="Barry C.E. III"/>
            <person name="Tekaia F."/>
            <person name="Badcock K."/>
            <person name="Basham D."/>
            <person name="Brown D."/>
            <person name="Chillingworth T."/>
            <person name="Connor R."/>
            <person name="Davies R.M."/>
            <person name="Devlin K."/>
            <person name="Feltwell T."/>
            <person name="Gentles S."/>
            <person name="Hamlin N."/>
            <person name="Holroyd S."/>
            <person name="Hornsby T."/>
            <person name="Jagels K."/>
            <person name="Krogh A."/>
            <person name="McLean J."/>
            <person name="Moule S."/>
            <person name="Murphy L.D."/>
            <person name="Oliver S."/>
            <person name="Osborne J."/>
            <person name="Quail M.A."/>
            <person name="Rajandream M.A."/>
            <person name="Rogers J."/>
            <person name="Rutter S."/>
            <person name="Seeger K."/>
            <person name="Skelton S."/>
            <person name="Squares S."/>
            <person name="Squares R."/>
            <person name="Sulston J.E."/>
            <person name="Taylor K."/>
            <person name="Whitehead S."/>
            <person name="Barrell B.G."/>
        </authorList>
    </citation>
    <scope>NUCLEOTIDE SEQUENCE [LARGE SCALE GENOMIC DNA]</scope>
    <source>
        <strain>ATCC 25618 / H37Rv</strain>
    </source>
</reference>
<reference key="2">
    <citation type="journal article" date="2002" name="Mol. Microbiol.">
        <title>Novel Mycobacterium tuberculosis anti-sigma factor antagonists control sigmaF activity by distinct mechanisms.</title>
        <authorList>
            <person name="Beaucher J."/>
            <person name="Rodrigue S."/>
            <person name="Jacques P.E."/>
            <person name="Smith I."/>
            <person name="Brzezinski R."/>
            <person name="Gaudreau L."/>
        </authorList>
    </citation>
    <scope>FUNCTION AS AN ANTI-SIGMA-F FACTOR ANTAGONIST</scope>
    <scope>INTERACTION WITH RSBW</scope>
    <scope>PHOSPHORYLATION AT SER-61</scope>
    <scope>MUTAGENESIS OF SER-61</scope>
</reference>
<reference key="3">
    <citation type="journal article" date="2011" name="Mol. Cell. Proteomics">
        <title>Proteogenomic analysis of Mycobacterium tuberculosis by high resolution mass spectrometry.</title>
        <authorList>
            <person name="Kelkar D.S."/>
            <person name="Kumar D."/>
            <person name="Kumar P."/>
            <person name="Balakrishnan L."/>
            <person name="Muthusamy B."/>
            <person name="Yadav A.K."/>
            <person name="Shrivastava P."/>
            <person name="Marimuthu A."/>
            <person name="Anand S."/>
            <person name="Sundaram H."/>
            <person name="Kingsbury R."/>
            <person name="Harsha H.C."/>
            <person name="Nair B."/>
            <person name="Prasad T.S."/>
            <person name="Chauhan D.S."/>
            <person name="Katoch K."/>
            <person name="Katoch V.M."/>
            <person name="Kumar P."/>
            <person name="Chaerkady R."/>
            <person name="Ramachandran S."/>
            <person name="Dash D."/>
            <person name="Pandey A."/>
        </authorList>
    </citation>
    <scope>IDENTIFICATION BY MASS SPECTROMETRY [LARGE SCALE ANALYSIS]</scope>
    <source>
        <strain>ATCC 25618 / H37Rv</strain>
    </source>
</reference>
<evidence type="ECO:0000255" key="1">
    <source>
        <dbReference type="PROSITE-ProRule" id="PRU00198"/>
    </source>
</evidence>
<evidence type="ECO:0000269" key="2">
    <source>
    </source>
</evidence>
<evidence type="ECO:0000305" key="3"/>
<evidence type="ECO:0000305" key="4">
    <source>
    </source>
</evidence>
<gene>
    <name type="primary">rsfB</name>
    <name type="ordered locus">Rv3687c</name>
</gene>
<name>RSFB_MYCTU</name>
<feature type="chain" id="PRO_0000422956" description="Anti-sigma-F factor antagonist RsfB">
    <location>
        <begin position="1"/>
        <end position="122"/>
    </location>
</feature>
<feature type="domain" description="STAS" evidence="1">
    <location>
        <begin position="7"/>
        <end position="115"/>
    </location>
</feature>
<feature type="modified residue" description="Phosphoserine" evidence="4">
    <location>
        <position position="61"/>
    </location>
</feature>
<feature type="mutagenesis site" description="Still interacts with RsbW." evidence="2">
    <original>S</original>
    <variation>A</variation>
    <location>
        <position position="61"/>
    </location>
</feature>
<feature type="mutagenesis site" description="No longer interacts with RsbW." evidence="2">
    <original>S</original>
    <variation>E</variation>
    <location>
        <position position="61"/>
    </location>
</feature>
<keyword id="KW-0002">3D-structure</keyword>
<keyword id="KW-0597">Phosphoprotein</keyword>
<keyword id="KW-1185">Reference proteome</keyword>
<keyword id="KW-0804">Transcription</keyword>
<keyword id="KW-0805">Transcription regulation</keyword>
<protein>
    <recommendedName>
        <fullName>Anti-sigma-F factor antagonist RsfB</fullName>
    </recommendedName>
    <alternativeName>
        <fullName>Anti-anti-sigma F factor RsfB</fullName>
    </alternativeName>
</protein>
<proteinExistence type="evidence at protein level"/>